<accession>O82134</accession>
<dbReference type="EMBL" id="AB008186">
    <property type="protein sequence ID" value="BAA33151.1"/>
    <property type="molecule type" value="mRNA"/>
</dbReference>
<dbReference type="EMBL" id="Y16796">
    <property type="protein sequence ID" value="CAA76392.1"/>
    <property type="molecule type" value="mRNA"/>
</dbReference>
<dbReference type="SMR" id="O82134"/>
<dbReference type="EnsemblPlants" id="Psat5g162720.1">
    <property type="protein sequence ID" value="Psat5g162720.1.cds"/>
    <property type="gene ID" value="Psat5g162720"/>
</dbReference>
<dbReference type="Gramene" id="Psat5g162720.1">
    <property type="protein sequence ID" value="Psat5g162720.1.cds"/>
    <property type="gene ID" value="Psat5g162720"/>
</dbReference>
<dbReference type="OrthoDB" id="534348at2759"/>
<dbReference type="GO" id="GO:0043626">
    <property type="term" value="C:PCNA complex"/>
    <property type="evidence" value="ECO:0007669"/>
    <property type="project" value="TreeGrafter"/>
</dbReference>
<dbReference type="GO" id="GO:0003677">
    <property type="term" value="F:DNA binding"/>
    <property type="evidence" value="ECO:0007669"/>
    <property type="project" value="UniProtKB-KW"/>
</dbReference>
<dbReference type="GO" id="GO:0030337">
    <property type="term" value="F:DNA polymerase processivity factor activity"/>
    <property type="evidence" value="ECO:0007669"/>
    <property type="project" value="InterPro"/>
</dbReference>
<dbReference type="GO" id="GO:0006272">
    <property type="term" value="P:leading strand elongation"/>
    <property type="evidence" value="ECO:0007669"/>
    <property type="project" value="TreeGrafter"/>
</dbReference>
<dbReference type="GO" id="GO:0006298">
    <property type="term" value="P:mismatch repair"/>
    <property type="evidence" value="ECO:0007669"/>
    <property type="project" value="TreeGrafter"/>
</dbReference>
<dbReference type="GO" id="GO:0006275">
    <property type="term" value="P:regulation of DNA replication"/>
    <property type="evidence" value="ECO:0007669"/>
    <property type="project" value="InterPro"/>
</dbReference>
<dbReference type="GO" id="GO:0019985">
    <property type="term" value="P:translesion synthesis"/>
    <property type="evidence" value="ECO:0007669"/>
    <property type="project" value="TreeGrafter"/>
</dbReference>
<dbReference type="CDD" id="cd00577">
    <property type="entry name" value="PCNA"/>
    <property type="match status" value="1"/>
</dbReference>
<dbReference type="FunFam" id="3.10.150.10:FF:000006">
    <property type="entry name" value="Proliferating cell nuclear antigen"/>
    <property type="match status" value="1"/>
</dbReference>
<dbReference type="FunFam" id="3.10.150.10:FF:000008">
    <property type="entry name" value="Proliferating cell nuclear antigen"/>
    <property type="match status" value="1"/>
</dbReference>
<dbReference type="FunFam" id="3.70.10.10:FF:000001">
    <property type="entry name" value="Proliferating cell nuclear antigen"/>
    <property type="match status" value="1"/>
</dbReference>
<dbReference type="Gene3D" id="3.70.10.10">
    <property type="match status" value="1"/>
</dbReference>
<dbReference type="HAMAP" id="MF_00317">
    <property type="entry name" value="DNApol_clamp_arch"/>
    <property type="match status" value="1"/>
</dbReference>
<dbReference type="InterPro" id="IPR046938">
    <property type="entry name" value="DNA_clamp_sf"/>
</dbReference>
<dbReference type="InterPro" id="IPR000730">
    <property type="entry name" value="Pr_cel_nuc_antig"/>
</dbReference>
<dbReference type="InterPro" id="IPR022649">
    <property type="entry name" value="Pr_cel_nuc_antig_C"/>
</dbReference>
<dbReference type="InterPro" id="IPR022659">
    <property type="entry name" value="Pr_cel_nuc_antig_CS"/>
</dbReference>
<dbReference type="InterPro" id="IPR022648">
    <property type="entry name" value="Pr_cel_nuc_antig_N"/>
</dbReference>
<dbReference type="NCBIfam" id="TIGR00590">
    <property type="entry name" value="pcna"/>
    <property type="match status" value="1"/>
</dbReference>
<dbReference type="PANTHER" id="PTHR11352">
    <property type="entry name" value="PROLIFERATING CELL NUCLEAR ANTIGEN"/>
    <property type="match status" value="1"/>
</dbReference>
<dbReference type="PANTHER" id="PTHR11352:SF0">
    <property type="entry name" value="PROLIFERATING CELL NUCLEAR ANTIGEN"/>
    <property type="match status" value="1"/>
</dbReference>
<dbReference type="Pfam" id="PF02747">
    <property type="entry name" value="PCNA_C"/>
    <property type="match status" value="1"/>
</dbReference>
<dbReference type="Pfam" id="PF00705">
    <property type="entry name" value="PCNA_N"/>
    <property type="match status" value="1"/>
</dbReference>
<dbReference type="PRINTS" id="PR00339">
    <property type="entry name" value="PCNACYCLIN"/>
</dbReference>
<dbReference type="SUPFAM" id="SSF55979">
    <property type="entry name" value="DNA clamp"/>
    <property type="match status" value="2"/>
</dbReference>
<dbReference type="PROSITE" id="PS01251">
    <property type="entry name" value="PCNA_1"/>
    <property type="match status" value="1"/>
</dbReference>
<dbReference type="PROSITE" id="PS00293">
    <property type="entry name" value="PCNA_2"/>
    <property type="match status" value="1"/>
</dbReference>
<evidence type="ECO:0000255" key="1"/>
<evidence type="ECO:0000305" key="2"/>
<name>PCNA_PEA</name>
<feature type="chain" id="PRO_0000149185" description="Proliferating cell nuclear antigen">
    <location>
        <begin position="1"/>
        <end position="266"/>
    </location>
</feature>
<feature type="DNA-binding region" evidence="1">
    <location>
        <begin position="61"/>
        <end position="80"/>
    </location>
</feature>
<proteinExistence type="evidence at transcript level"/>
<keyword id="KW-0235">DNA replication</keyword>
<keyword id="KW-0238">DNA-binding</keyword>
<keyword id="KW-0539">Nucleus</keyword>
<organism>
    <name type="scientific">Pisum sativum</name>
    <name type="common">Garden pea</name>
    <name type="synonym">Lathyrus oleraceus</name>
    <dbReference type="NCBI Taxonomy" id="3888"/>
    <lineage>
        <taxon>Eukaryota</taxon>
        <taxon>Viridiplantae</taxon>
        <taxon>Streptophyta</taxon>
        <taxon>Embryophyta</taxon>
        <taxon>Tracheophyta</taxon>
        <taxon>Spermatophyta</taxon>
        <taxon>Magnoliopsida</taxon>
        <taxon>eudicotyledons</taxon>
        <taxon>Gunneridae</taxon>
        <taxon>Pentapetalae</taxon>
        <taxon>rosids</taxon>
        <taxon>fabids</taxon>
        <taxon>Fabales</taxon>
        <taxon>Fabaceae</taxon>
        <taxon>Papilionoideae</taxon>
        <taxon>50 kb inversion clade</taxon>
        <taxon>NPAAA clade</taxon>
        <taxon>Hologalegina</taxon>
        <taxon>IRL clade</taxon>
        <taxon>Fabeae</taxon>
        <taxon>Pisum</taxon>
    </lineage>
</organism>
<protein>
    <recommendedName>
        <fullName>Proliferating cell nuclear antigen</fullName>
    </recommendedName>
</protein>
<gene>
    <name type="primary">PCNA</name>
</gene>
<reference key="1">
    <citation type="journal article" date="1998" name="Plant Cell Physiol.">
        <title>Analysis of cycles of dormancy and growth in pea axillary buds based on mRNA accumulation patterns of cell cycle-related genes.</title>
        <authorList>
            <person name="Shimizu S."/>
            <person name="Mori H."/>
        </authorList>
    </citation>
    <scope>NUCLEOTIDE SEQUENCE [MRNA]</scope>
</reference>
<reference key="2">
    <citation type="submission" date="1998-08" db="EMBL/GenBank/DDBJ databases">
        <authorList>
            <person name="Duong van H."/>
            <person name="Gaikwad A.S."/>
            <person name="Mukherjee S.K."/>
        </authorList>
    </citation>
    <scope>NUCLEOTIDE SEQUENCE [MRNA]</scope>
</reference>
<comment type="function">
    <text>This protein is an auxiliary protein of DNA polymerase delta and is involved in the control of eukaryotic DNA replication by increasing the polymerase's processibility during elongation of the leading strand.</text>
</comment>
<comment type="subcellular location">
    <subcellularLocation>
        <location>Nucleus</location>
    </subcellularLocation>
</comment>
<comment type="similarity">
    <text evidence="2">Belongs to the PCNA family.</text>
</comment>
<sequence length="266" mass="29474">MLELRLVQGSLLKKVLESIKELVNDANFDCSSTGFSLQAMDSSHVALVALLLRSEGFEHYRCDRNLSMGMNLNNMAKMLKCAGNDDIITIKADDGSDTVTFMFESPTQDKISDFEMKLMDIDSEHLGIPEAEYHAIVRMPSAEFARICKDLSSIGDTVVIAVSKEGVKFSTKGDIGSANIVCRQNTTVDKPEEATVIEMNEPVALQFALRYMNSFTKATPLSSSVTISLSNELPVVVEYKIAEMGYVRFYLAPKIEEDEEETKPQA</sequence>